<feature type="transit peptide" description="Chloroplast" evidence="2">
    <location>
        <begin position="1"/>
        <end position="49"/>
    </location>
</feature>
<feature type="chain" id="PRO_0000226594" description="Probable phytol kinase 2, chloroplastic">
    <location>
        <begin position="50"/>
        <end position="292"/>
    </location>
</feature>
<feature type="transmembrane region" description="Helical" evidence="2">
    <location>
        <begin position="98"/>
        <end position="118"/>
    </location>
</feature>
<feature type="transmembrane region" description="Helical" evidence="2">
    <location>
        <begin position="120"/>
        <end position="142"/>
    </location>
</feature>
<feature type="transmembrane region" description="Helical" evidence="2">
    <location>
        <begin position="148"/>
        <end position="168"/>
    </location>
</feature>
<feature type="transmembrane region" description="Helical" evidence="2">
    <location>
        <begin position="216"/>
        <end position="236"/>
    </location>
</feature>
<feature type="transmembrane region" description="Helical" evidence="2">
    <location>
        <begin position="243"/>
        <end position="263"/>
    </location>
</feature>
<feature type="transmembrane region" description="Helical" evidence="2">
    <location>
        <begin position="265"/>
        <end position="285"/>
    </location>
</feature>
<sequence length="292" mass="31371">MAAAAAWTGAASPNSLLLSRSPPHAAALAPSPGSSMRRRLLLGVGTPAVAALAAAAPPAVLQDGAVTVLITAGAYSLVRVFDELTERRLIEKSLSRKVVHVLSGVLFMSSWPLFSNSTEARYFAAVVPFLNSMRLLIYGLRLYTDEALELLRGPLYYVLVLLFSVLVFWRESPIGIVSLSMMSGGDGFADIVGRRYGSAKLPFNRKKSWAGSISMFISGFLLSAMMMLYFSSLGYIDVIWEEALGKLALVALAATVVECVPVTEVVDDNISVPLATMLVAFLLFSSNRTIVN</sequence>
<keyword id="KW-0150">Chloroplast</keyword>
<keyword id="KW-0418">Kinase</keyword>
<keyword id="KW-0472">Membrane</keyword>
<keyword id="KW-0934">Plastid</keyword>
<keyword id="KW-1185">Reference proteome</keyword>
<keyword id="KW-0808">Transferase</keyword>
<keyword id="KW-0809">Transit peptide</keyword>
<keyword id="KW-0812">Transmembrane</keyword>
<keyword id="KW-1133">Transmembrane helix</keyword>
<protein>
    <recommendedName>
        <fullName>Probable phytol kinase 2, chloroplastic</fullName>
        <ecNumber>2.7.1.182</ecNumber>
    </recommendedName>
</protein>
<accession>Q2N2K2</accession>
<name>PHYK2_SOYBN</name>
<dbReference type="EC" id="2.7.1.182"/>
<dbReference type="EMBL" id="DQ163026">
    <property type="protein sequence ID" value="ABA42675.1"/>
    <property type="molecule type" value="mRNA"/>
</dbReference>
<dbReference type="STRING" id="3847.Q2N2K2"/>
<dbReference type="InParanoid" id="Q2N2K2"/>
<dbReference type="UniPathway" id="UPA00160"/>
<dbReference type="Proteomes" id="UP000008827">
    <property type="component" value="Unplaced"/>
</dbReference>
<dbReference type="GO" id="GO:0009507">
    <property type="term" value="C:chloroplast"/>
    <property type="evidence" value="ECO:0000318"/>
    <property type="project" value="GO_Central"/>
</dbReference>
<dbReference type="GO" id="GO:0031969">
    <property type="term" value="C:chloroplast membrane"/>
    <property type="evidence" value="ECO:0007669"/>
    <property type="project" value="UniProtKB-SubCell"/>
</dbReference>
<dbReference type="GO" id="GO:0010276">
    <property type="term" value="F:phytol kinase activity"/>
    <property type="evidence" value="ECO:0000318"/>
    <property type="project" value="GO_Central"/>
</dbReference>
<dbReference type="GO" id="GO:0010189">
    <property type="term" value="P:vitamin E biosynthetic process"/>
    <property type="evidence" value="ECO:0000318"/>
    <property type="project" value="GO_Central"/>
</dbReference>
<dbReference type="InterPro" id="IPR039606">
    <property type="entry name" value="Phytol/farnesol_kinase"/>
</dbReference>
<dbReference type="PANTHER" id="PTHR32523:SF8">
    <property type="entry name" value="DOLICHOL KINASE"/>
    <property type="match status" value="1"/>
</dbReference>
<dbReference type="PANTHER" id="PTHR32523">
    <property type="entry name" value="PHYTOL KINASE 1, CHLOROPLASTIC"/>
    <property type="match status" value="1"/>
</dbReference>
<evidence type="ECO:0000250" key="1"/>
<evidence type="ECO:0000255" key="2"/>
<evidence type="ECO:0000305" key="3"/>
<organism>
    <name type="scientific">Glycine max</name>
    <name type="common">Soybean</name>
    <name type="synonym">Glycine hispida</name>
    <dbReference type="NCBI Taxonomy" id="3847"/>
    <lineage>
        <taxon>Eukaryota</taxon>
        <taxon>Viridiplantae</taxon>
        <taxon>Streptophyta</taxon>
        <taxon>Embryophyta</taxon>
        <taxon>Tracheophyta</taxon>
        <taxon>Spermatophyta</taxon>
        <taxon>Magnoliopsida</taxon>
        <taxon>eudicotyledons</taxon>
        <taxon>Gunneridae</taxon>
        <taxon>Pentapetalae</taxon>
        <taxon>rosids</taxon>
        <taxon>fabids</taxon>
        <taxon>Fabales</taxon>
        <taxon>Fabaceae</taxon>
        <taxon>Papilionoideae</taxon>
        <taxon>50 kb inversion clade</taxon>
        <taxon>NPAAA clade</taxon>
        <taxon>indigoferoid/millettioid clade</taxon>
        <taxon>Phaseoleae</taxon>
        <taxon>Glycine</taxon>
        <taxon>Glycine subgen. Soja</taxon>
    </lineage>
</organism>
<proteinExistence type="evidence at transcript level"/>
<reference key="1">
    <citation type="journal article" date="2006" name="Plant Cell">
        <title>The Arabidopsis vitamin E pathway gene5-1 mutant reveals a critical role for phytol kinase in seed tocopherol biosynthesis.</title>
        <authorList>
            <person name="Valentin H.E."/>
            <person name="Lincoln K."/>
            <person name="Moshiri F."/>
            <person name="Jensen P.K."/>
            <person name="Qi Q."/>
            <person name="Venkatesh T.V."/>
            <person name="Karunanandaa B."/>
            <person name="Baszis S.R."/>
            <person name="Norris S.R."/>
            <person name="Savidge B."/>
            <person name="Gruys K.J."/>
            <person name="Last R.L."/>
        </authorList>
    </citation>
    <scope>NUCLEOTIDE SEQUENCE [MRNA]</scope>
</reference>
<comment type="function">
    <text evidence="1">Involved in the activation and reutilization of phytol from chlorophyll degradation in plant metabolism, including tocopherol biosynthesis. Catalyzes the conversion of phytol to phytol monophosphate (PMP) (By similarity).</text>
</comment>
<comment type="catalytic activity">
    <reaction>
        <text>phytol + CTP = phytyl phosphate + CDP + H(+)</text>
        <dbReference type="Rhea" id="RHEA:38055"/>
        <dbReference type="ChEBI" id="CHEBI:15378"/>
        <dbReference type="ChEBI" id="CHEBI:17327"/>
        <dbReference type="ChEBI" id="CHEBI:37563"/>
        <dbReference type="ChEBI" id="CHEBI:58069"/>
        <dbReference type="ChEBI" id="CHEBI:75483"/>
        <dbReference type="EC" id="2.7.1.182"/>
    </reaction>
</comment>
<comment type="pathway">
    <text>Cofactor biosynthesis; tocopherol biosynthesis.</text>
</comment>
<comment type="subcellular location">
    <subcellularLocation>
        <location evidence="3">Plastid</location>
        <location evidence="3">Chloroplast membrane</location>
        <topology evidence="3">Multi-pass membrane protein</topology>
    </subcellularLocation>
</comment>
<comment type="similarity">
    <text evidence="3">Belongs to the polyprenol kinase family.</text>
</comment>